<keyword id="KW-0004">4Fe-4S</keyword>
<keyword id="KW-0963">Cytoplasm</keyword>
<keyword id="KW-0408">Iron</keyword>
<keyword id="KW-0411">Iron-sulfur</keyword>
<keyword id="KW-0479">Metal-binding</keyword>
<keyword id="KW-1185">Reference proteome</keyword>
<keyword id="KW-0949">S-adenosyl-L-methionine</keyword>
<keyword id="KW-0808">Transferase</keyword>
<keyword id="KW-0819">tRNA processing</keyword>
<accession>B6YRD1</accession>
<protein>
    <recommendedName>
        <fullName evidence="1">tRNA-2-methylthio-N(6)-dimethylallyladenosine synthase</fullName>
        <ecNumber evidence="1">2.8.4.3</ecNumber>
    </recommendedName>
    <alternativeName>
        <fullName evidence="1">(Dimethylallyl)adenosine tRNA methylthiotransferase MiaB</fullName>
    </alternativeName>
    <alternativeName>
        <fullName evidence="1">tRNA-i(6)A37 methylthiotransferase</fullName>
    </alternativeName>
</protein>
<comment type="function">
    <text evidence="1">Catalyzes the methylthiolation of N6-(dimethylallyl)adenosine (i(6)A), leading to the formation of 2-methylthio-N6-(dimethylallyl)adenosine (ms(2)i(6)A) at position 37 in tRNAs that read codons beginning with uridine.</text>
</comment>
<comment type="catalytic activity">
    <reaction evidence="1">
        <text>N(6)-dimethylallyladenosine(37) in tRNA + (sulfur carrier)-SH + AH2 + 2 S-adenosyl-L-methionine = 2-methylsulfanyl-N(6)-dimethylallyladenosine(37) in tRNA + (sulfur carrier)-H + 5'-deoxyadenosine + L-methionine + A + S-adenosyl-L-homocysteine + 2 H(+)</text>
        <dbReference type="Rhea" id="RHEA:37067"/>
        <dbReference type="Rhea" id="RHEA-COMP:10375"/>
        <dbReference type="Rhea" id="RHEA-COMP:10376"/>
        <dbReference type="Rhea" id="RHEA-COMP:14737"/>
        <dbReference type="Rhea" id="RHEA-COMP:14739"/>
        <dbReference type="ChEBI" id="CHEBI:13193"/>
        <dbReference type="ChEBI" id="CHEBI:15378"/>
        <dbReference type="ChEBI" id="CHEBI:17319"/>
        <dbReference type="ChEBI" id="CHEBI:17499"/>
        <dbReference type="ChEBI" id="CHEBI:29917"/>
        <dbReference type="ChEBI" id="CHEBI:57844"/>
        <dbReference type="ChEBI" id="CHEBI:57856"/>
        <dbReference type="ChEBI" id="CHEBI:59789"/>
        <dbReference type="ChEBI" id="CHEBI:64428"/>
        <dbReference type="ChEBI" id="CHEBI:74415"/>
        <dbReference type="ChEBI" id="CHEBI:74417"/>
        <dbReference type="EC" id="2.8.4.3"/>
    </reaction>
</comment>
<comment type="cofactor">
    <cofactor evidence="1">
        <name>[4Fe-4S] cluster</name>
        <dbReference type="ChEBI" id="CHEBI:49883"/>
    </cofactor>
    <text evidence="1">Binds 2 [4Fe-4S] clusters. One cluster is coordinated with 3 cysteines and an exchangeable S-adenosyl-L-methionine.</text>
</comment>
<comment type="subunit">
    <text evidence="1">Monomer.</text>
</comment>
<comment type="subcellular location">
    <subcellularLocation>
        <location evidence="1">Cytoplasm</location>
    </subcellularLocation>
</comment>
<comment type="similarity">
    <text evidence="1">Belongs to the methylthiotransferase family. MiaB subfamily.</text>
</comment>
<organism>
    <name type="scientific">Azobacteroides pseudotrichonymphae genomovar. CFP2</name>
    <dbReference type="NCBI Taxonomy" id="511995"/>
    <lineage>
        <taxon>Bacteria</taxon>
        <taxon>Pseudomonadati</taxon>
        <taxon>Bacteroidota</taxon>
        <taxon>Bacteroidia</taxon>
        <taxon>Bacteroidales</taxon>
        <taxon>Candidatus Azobacteroides</taxon>
    </lineage>
</organism>
<dbReference type="EC" id="2.8.4.3" evidence="1"/>
<dbReference type="EMBL" id="AP010656">
    <property type="protein sequence ID" value="BAG83753.1"/>
    <property type="molecule type" value="Genomic_DNA"/>
</dbReference>
<dbReference type="RefSeq" id="WP_012573514.1">
    <property type="nucleotide sequence ID" value="NC_011565.1"/>
</dbReference>
<dbReference type="SMR" id="B6YRD1"/>
<dbReference type="STRING" id="511995.CFPG_490"/>
<dbReference type="KEGG" id="aps:CFPG_490"/>
<dbReference type="eggNOG" id="COG0621">
    <property type="taxonomic scope" value="Bacteria"/>
</dbReference>
<dbReference type="HOGENOM" id="CLU_018697_2_0_10"/>
<dbReference type="OrthoDB" id="9805215at2"/>
<dbReference type="Proteomes" id="UP000000723">
    <property type="component" value="Chromosome"/>
</dbReference>
<dbReference type="GO" id="GO:0005829">
    <property type="term" value="C:cytosol"/>
    <property type="evidence" value="ECO:0007669"/>
    <property type="project" value="TreeGrafter"/>
</dbReference>
<dbReference type="GO" id="GO:0051539">
    <property type="term" value="F:4 iron, 4 sulfur cluster binding"/>
    <property type="evidence" value="ECO:0007669"/>
    <property type="project" value="UniProtKB-UniRule"/>
</dbReference>
<dbReference type="GO" id="GO:0046872">
    <property type="term" value="F:metal ion binding"/>
    <property type="evidence" value="ECO:0007669"/>
    <property type="project" value="UniProtKB-KW"/>
</dbReference>
<dbReference type="GO" id="GO:0035597">
    <property type="term" value="F:N6-isopentenyladenosine methylthiotransferase activity"/>
    <property type="evidence" value="ECO:0007669"/>
    <property type="project" value="TreeGrafter"/>
</dbReference>
<dbReference type="CDD" id="cd01335">
    <property type="entry name" value="Radical_SAM"/>
    <property type="match status" value="1"/>
</dbReference>
<dbReference type="FunFam" id="3.40.50.12160:FF:000003">
    <property type="entry name" value="CDK5 regulatory subunit-associated protein 1"/>
    <property type="match status" value="1"/>
</dbReference>
<dbReference type="FunFam" id="3.80.30.20:FF:000001">
    <property type="entry name" value="tRNA-2-methylthio-N(6)-dimethylallyladenosine synthase 2"/>
    <property type="match status" value="1"/>
</dbReference>
<dbReference type="Gene3D" id="3.40.50.12160">
    <property type="entry name" value="Methylthiotransferase, N-terminal domain"/>
    <property type="match status" value="1"/>
</dbReference>
<dbReference type="Gene3D" id="3.80.30.20">
    <property type="entry name" value="tm_1862 like domain"/>
    <property type="match status" value="1"/>
</dbReference>
<dbReference type="HAMAP" id="MF_01864">
    <property type="entry name" value="tRNA_metthiotr_MiaB"/>
    <property type="match status" value="1"/>
</dbReference>
<dbReference type="InterPro" id="IPR006638">
    <property type="entry name" value="Elp3/MiaA/NifB-like_rSAM"/>
</dbReference>
<dbReference type="InterPro" id="IPR005839">
    <property type="entry name" value="Methylthiotransferase"/>
</dbReference>
<dbReference type="InterPro" id="IPR020612">
    <property type="entry name" value="Methylthiotransferase_CS"/>
</dbReference>
<dbReference type="InterPro" id="IPR013848">
    <property type="entry name" value="Methylthiotransferase_N"/>
</dbReference>
<dbReference type="InterPro" id="IPR038135">
    <property type="entry name" value="Methylthiotransferase_N_sf"/>
</dbReference>
<dbReference type="InterPro" id="IPR006463">
    <property type="entry name" value="MiaB_methiolase"/>
</dbReference>
<dbReference type="InterPro" id="IPR007197">
    <property type="entry name" value="rSAM"/>
</dbReference>
<dbReference type="InterPro" id="IPR023404">
    <property type="entry name" value="rSAM_horseshoe"/>
</dbReference>
<dbReference type="InterPro" id="IPR002792">
    <property type="entry name" value="TRAM_dom"/>
</dbReference>
<dbReference type="NCBIfam" id="TIGR01574">
    <property type="entry name" value="miaB-methiolase"/>
    <property type="match status" value="1"/>
</dbReference>
<dbReference type="NCBIfam" id="TIGR00089">
    <property type="entry name" value="MiaB/RimO family radical SAM methylthiotransferase"/>
    <property type="match status" value="1"/>
</dbReference>
<dbReference type="PANTHER" id="PTHR43020">
    <property type="entry name" value="CDK5 REGULATORY SUBUNIT-ASSOCIATED PROTEIN 1"/>
    <property type="match status" value="1"/>
</dbReference>
<dbReference type="PANTHER" id="PTHR43020:SF2">
    <property type="entry name" value="MITOCHONDRIAL TRNA METHYLTHIOTRANSFERASE CDK5RAP1"/>
    <property type="match status" value="1"/>
</dbReference>
<dbReference type="Pfam" id="PF04055">
    <property type="entry name" value="Radical_SAM"/>
    <property type="match status" value="1"/>
</dbReference>
<dbReference type="Pfam" id="PF01938">
    <property type="entry name" value="TRAM"/>
    <property type="match status" value="1"/>
</dbReference>
<dbReference type="Pfam" id="PF00919">
    <property type="entry name" value="UPF0004"/>
    <property type="match status" value="1"/>
</dbReference>
<dbReference type="SFLD" id="SFLDF00273">
    <property type="entry name" value="(dimethylallyl)adenosine_tRNA"/>
    <property type="match status" value="1"/>
</dbReference>
<dbReference type="SFLD" id="SFLDG01082">
    <property type="entry name" value="B12-binding_domain_containing"/>
    <property type="match status" value="1"/>
</dbReference>
<dbReference type="SFLD" id="SFLDF00413">
    <property type="entry name" value="CDK5RAP1"/>
    <property type="match status" value="1"/>
</dbReference>
<dbReference type="SFLD" id="SFLDS00029">
    <property type="entry name" value="Radical_SAM"/>
    <property type="match status" value="1"/>
</dbReference>
<dbReference type="SMART" id="SM00729">
    <property type="entry name" value="Elp3"/>
    <property type="match status" value="1"/>
</dbReference>
<dbReference type="SUPFAM" id="SSF102114">
    <property type="entry name" value="Radical SAM enzymes"/>
    <property type="match status" value="1"/>
</dbReference>
<dbReference type="PROSITE" id="PS51449">
    <property type="entry name" value="MTTASE_N"/>
    <property type="match status" value="1"/>
</dbReference>
<dbReference type="PROSITE" id="PS01278">
    <property type="entry name" value="MTTASE_RADICAL"/>
    <property type="match status" value="1"/>
</dbReference>
<dbReference type="PROSITE" id="PS51918">
    <property type="entry name" value="RADICAL_SAM"/>
    <property type="match status" value="1"/>
</dbReference>
<dbReference type="PROSITE" id="PS50926">
    <property type="entry name" value="TRAM"/>
    <property type="match status" value="1"/>
</dbReference>
<sequence>MFEEKLSTDNNIRRIFIETYGCQMNIADSEIVIAIVQMDGFEYTENILEADVVLINTCSVRENAEKKIFSRLQYFQSLKKKRNQLIIGVLGCMAKRIRETLIQQYHVDLVVGPDSYMDLPHLIGTVEKGAKAININLSSTEVYKGIVPLKLSRIKISGFISIIRGCNNFCSYCIVPYTRGRERSRDPKSILNELHILKEQGYKEVILLGQNVNSYFYKNENITDFPHLLELVALNAPEMRIRFTTSHPKDMGDETLRVIAKYNNICKHIHLPIQSGSSKILRAMNRKYTREWYLQRVTSIRKIVPEVSISTDLFCGFPSETEEDHKKTLSLMKEVGFDSAFMFKYSERPETYASRYLPDNVPEEVKIRRLNEIITLQLKISLMKNKENIGKTMEILIEGFSKRSREQLFGRTLQNKIVLFPRKNYHIGEKVLVEIKKASAATLFGDPKL</sequence>
<gene>
    <name evidence="1" type="primary">miaB</name>
    <name type="ordered locus">CFPG_490</name>
</gene>
<name>MIAB_AZOPC</name>
<proteinExistence type="inferred from homology"/>
<evidence type="ECO:0000255" key="1">
    <source>
        <dbReference type="HAMAP-Rule" id="MF_01864"/>
    </source>
</evidence>
<evidence type="ECO:0000255" key="2">
    <source>
        <dbReference type="PROSITE-ProRule" id="PRU01266"/>
    </source>
</evidence>
<feature type="chain" id="PRO_0000374121" description="tRNA-2-methylthio-N(6)-dimethylallyladenosine synthase">
    <location>
        <begin position="1"/>
        <end position="449"/>
    </location>
</feature>
<feature type="domain" description="MTTase N-terminal" evidence="1">
    <location>
        <begin position="13"/>
        <end position="128"/>
    </location>
</feature>
<feature type="domain" description="Radical SAM core" evidence="2">
    <location>
        <begin position="152"/>
        <end position="383"/>
    </location>
</feature>
<feature type="domain" description="TRAM" evidence="1">
    <location>
        <begin position="386"/>
        <end position="449"/>
    </location>
</feature>
<feature type="binding site" evidence="1">
    <location>
        <position position="22"/>
    </location>
    <ligand>
        <name>[4Fe-4S] cluster</name>
        <dbReference type="ChEBI" id="CHEBI:49883"/>
        <label>1</label>
    </ligand>
</feature>
<feature type="binding site" evidence="1">
    <location>
        <position position="58"/>
    </location>
    <ligand>
        <name>[4Fe-4S] cluster</name>
        <dbReference type="ChEBI" id="CHEBI:49883"/>
        <label>1</label>
    </ligand>
</feature>
<feature type="binding site" evidence="1">
    <location>
        <position position="92"/>
    </location>
    <ligand>
        <name>[4Fe-4S] cluster</name>
        <dbReference type="ChEBI" id="CHEBI:49883"/>
        <label>1</label>
    </ligand>
</feature>
<feature type="binding site" evidence="1">
    <location>
        <position position="166"/>
    </location>
    <ligand>
        <name>[4Fe-4S] cluster</name>
        <dbReference type="ChEBI" id="CHEBI:49883"/>
        <label>2</label>
        <note>4Fe-4S-S-AdoMet</note>
    </ligand>
</feature>
<feature type="binding site" evidence="1">
    <location>
        <position position="170"/>
    </location>
    <ligand>
        <name>[4Fe-4S] cluster</name>
        <dbReference type="ChEBI" id="CHEBI:49883"/>
        <label>2</label>
        <note>4Fe-4S-S-AdoMet</note>
    </ligand>
</feature>
<feature type="binding site" evidence="1">
    <location>
        <position position="173"/>
    </location>
    <ligand>
        <name>[4Fe-4S] cluster</name>
        <dbReference type="ChEBI" id="CHEBI:49883"/>
        <label>2</label>
        <note>4Fe-4S-S-AdoMet</note>
    </ligand>
</feature>
<reference key="1">
    <citation type="journal article" date="2008" name="Science">
        <title>Genome of an endosymbiont coupling N2 fixation to cellulolysis within RT protist cells in termite gut.</title>
        <authorList>
            <person name="Hongoh Y."/>
            <person name="Sharma V.K."/>
            <person name="Prakash T."/>
            <person name="Noda S."/>
            <person name="Toh H."/>
            <person name="Taylor T.D."/>
            <person name="Kudo T."/>
            <person name="Sakaki Y."/>
            <person name="Toyoda A."/>
            <person name="Hattori M."/>
            <person name="Ohkuma M."/>
        </authorList>
    </citation>
    <scope>NUCLEOTIDE SEQUENCE [LARGE SCALE GENOMIC DNA]</scope>
</reference>